<protein>
    <recommendedName>
        <fullName evidence="1">Large ribosomal subunit protein bL21</fullName>
    </recommendedName>
    <alternativeName>
        <fullName evidence="2">50S ribosomal protein L21</fullName>
    </alternativeName>
</protein>
<feature type="chain" id="PRO_1000143845" description="Large ribosomal subunit protein bL21">
    <location>
        <begin position="1"/>
        <end position="103"/>
    </location>
</feature>
<accession>B5REQ2</accession>
<dbReference type="EMBL" id="AM933173">
    <property type="protein sequence ID" value="CAR38992.1"/>
    <property type="molecule type" value="Genomic_DNA"/>
</dbReference>
<dbReference type="RefSeq" id="WP_000271396.1">
    <property type="nucleotide sequence ID" value="NC_011274.1"/>
</dbReference>
<dbReference type="SMR" id="B5REQ2"/>
<dbReference type="GeneID" id="66757643"/>
<dbReference type="KEGG" id="seg:SG3194"/>
<dbReference type="HOGENOM" id="CLU_061463_3_3_6"/>
<dbReference type="Proteomes" id="UP000008321">
    <property type="component" value="Chromosome"/>
</dbReference>
<dbReference type="GO" id="GO:0005737">
    <property type="term" value="C:cytoplasm"/>
    <property type="evidence" value="ECO:0007669"/>
    <property type="project" value="UniProtKB-ARBA"/>
</dbReference>
<dbReference type="GO" id="GO:1990904">
    <property type="term" value="C:ribonucleoprotein complex"/>
    <property type="evidence" value="ECO:0007669"/>
    <property type="project" value="UniProtKB-KW"/>
</dbReference>
<dbReference type="GO" id="GO:0005840">
    <property type="term" value="C:ribosome"/>
    <property type="evidence" value="ECO:0007669"/>
    <property type="project" value="UniProtKB-KW"/>
</dbReference>
<dbReference type="GO" id="GO:0019843">
    <property type="term" value="F:rRNA binding"/>
    <property type="evidence" value="ECO:0007669"/>
    <property type="project" value="UniProtKB-UniRule"/>
</dbReference>
<dbReference type="GO" id="GO:0003735">
    <property type="term" value="F:structural constituent of ribosome"/>
    <property type="evidence" value="ECO:0007669"/>
    <property type="project" value="InterPro"/>
</dbReference>
<dbReference type="GO" id="GO:0006412">
    <property type="term" value="P:translation"/>
    <property type="evidence" value="ECO:0007669"/>
    <property type="project" value="UniProtKB-UniRule"/>
</dbReference>
<dbReference type="HAMAP" id="MF_01363">
    <property type="entry name" value="Ribosomal_bL21"/>
    <property type="match status" value="1"/>
</dbReference>
<dbReference type="InterPro" id="IPR028909">
    <property type="entry name" value="bL21-like"/>
</dbReference>
<dbReference type="InterPro" id="IPR036164">
    <property type="entry name" value="bL21-like_sf"/>
</dbReference>
<dbReference type="InterPro" id="IPR001787">
    <property type="entry name" value="Ribosomal_bL21"/>
</dbReference>
<dbReference type="InterPro" id="IPR018258">
    <property type="entry name" value="Ribosomal_bL21_CS"/>
</dbReference>
<dbReference type="NCBIfam" id="TIGR00061">
    <property type="entry name" value="L21"/>
    <property type="match status" value="1"/>
</dbReference>
<dbReference type="PANTHER" id="PTHR21349">
    <property type="entry name" value="50S RIBOSOMAL PROTEIN L21"/>
    <property type="match status" value="1"/>
</dbReference>
<dbReference type="PANTHER" id="PTHR21349:SF0">
    <property type="entry name" value="LARGE RIBOSOMAL SUBUNIT PROTEIN BL21M"/>
    <property type="match status" value="1"/>
</dbReference>
<dbReference type="Pfam" id="PF00829">
    <property type="entry name" value="Ribosomal_L21p"/>
    <property type="match status" value="1"/>
</dbReference>
<dbReference type="SUPFAM" id="SSF141091">
    <property type="entry name" value="L21p-like"/>
    <property type="match status" value="1"/>
</dbReference>
<dbReference type="PROSITE" id="PS01169">
    <property type="entry name" value="RIBOSOMAL_L21"/>
    <property type="match status" value="1"/>
</dbReference>
<proteinExistence type="inferred from homology"/>
<gene>
    <name evidence="1" type="primary">rplU</name>
    <name type="ordered locus">SG3194</name>
</gene>
<comment type="function">
    <text evidence="1">This protein binds to 23S rRNA in the presence of protein L20.</text>
</comment>
<comment type="subunit">
    <text evidence="1">Part of the 50S ribosomal subunit. Contacts protein L20.</text>
</comment>
<comment type="similarity">
    <text evidence="1">Belongs to the bacterial ribosomal protein bL21 family.</text>
</comment>
<organism>
    <name type="scientific">Salmonella gallinarum (strain 287/91 / NCTC 13346)</name>
    <dbReference type="NCBI Taxonomy" id="550538"/>
    <lineage>
        <taxon>Bacteria</taxon>
        <taxon>Pseudomonadati</taxon>
        <taxon>Pseudomonadota</taxon>
        <taxon>Gammaproteobacteria</taxon>
        <taxon>Enterobacterales</taxon>
        <taxon>Enterobacteriaceae</taxon>
        <taxon>Salmonella</taxon>
    </lineage>
</organism>
<sequence>MYAVFQSGGKQHRVSEGQTVRLEKLDIATGETIEFAEVLMIANGEEVKIGVPFVDGGVIKAEVVAHGRGEKVKIVKFRRRKHYRKQQGHRQWFTDVKITGISA</sequence>
<reference key="1">
    <citation type="journal article" date="2008" name="Genome Res.">
        <title>Comparative genome analysis of Salmonella enteritidis PT4 and Salmonella gallinarum 287/91 provides insights into evolutionary and host adaptation pathways.</title>
        <authorList>
            <person name="Thomson N.R."/>
            <person name="Clayton D.J."/>
            <person name="Windhorst D."/>
            <person name="Vernikos G."/>
            <person name="Davidson S."/>
            <person name="Churcher C."/>
            <person name="Quail M.A."/>
            <person name="Stevens M."/>
            <person name="Jones M.A."/>
            <person name="Watson M."/>
            <person name="Barron A."/>
            <person name="Layton A."/>
            <person name="Pickard D."/>
            <person name="Kingsley R.A."/>
            <person name="Bignell A."/>
            <person name="Clark L."/>
            <person name="Harris B."/>
            <person name="Ormond D."/>
            <person name="Abdellah Z."/>
            <person name="Brooks K."/>
            <person name="Cherevach I."/>
            <person name="Chillingworth T."/>
            <person name="Woodward J."/>
            <person name="Norberczak H."/>
            <person name="Lord A."/>
            <person name="Arrowsmith C."/>
            <person name="Jagels K."/>
            <person name="Moule S."/>
            <person name="Mungall K."/>
            <person name="Saunders M."/>
            <person name="Whitehead S."/>
            <person name="Chabalgoity J.A."/>
            <person name="Maskell D."/>
            <person name="Humphreys T."/>
            <person name="Roberts M."/>
            <person name="Barrow P.A."/>
            <person name="Dougan G."/>
            <person name="Parkhill J."/>
        </authorList>
    </citation>
    <scope>NUCLEOTIDE SEQUENCE [LARGE SCALE GENOMIC DNA]</scope>
    <source>
        <strain>287/91 / NCTC 13346</strain>
    </source>
</reference>
<evidence type="ECO:0000255" key="1">
    <source>
        <dbReference type="HAMAP-Rule" id="MF_01363"/>
    </source>
</evidence>
<evidence type="ECO:0000305" key="2"/>
<keyword id="KW-0687">Ribonucleoprotein</keyword>
<keyword id="KW-0689">Ribosomal protein</keyword>
<keyword id="KW-0694">RNA-binding</keyword>
<keyword id="KW-0699">rRNA-binding</keyword>
<name>RL21_SALG2</name>